<name>UBID_PSEAB</name>
<feature type="chain" id="PRO_1000069853" description="3-octaprenyl-4-hydroxybenzoate carboxy-lyase">
    <location>
        <begin position="1"/>
        <end position="488"/>
    </location>
</feature>
<feature type="active site" description="Proton donor" evidence="1">
    <location>
        <position position="287"/>
    </location>
</feature>
<feature type="binding site" evidence="1">
    <location>
        <position position="172"/>
    </location>
    <ligand>
        <name>Mn(2+)</name>
        <dbReference type="ChEBI" id="CHEBI:29035"/>
    </ligand>
</feature>
<feature type="binding site" evidence="1">
    <location>
        <begin position="175"/>
        <end position="177"/>
    </location>
    <ligand>
        <name>prenylated FMN</name>
        <dbReference type="ChEBI" id="CHEBI:87746"/>
    </ligand>
</feature>
<feature type="binding site" evidence="1">
    <location>
        <begin position="189"/>
        <end position="191"/>
    </location>
    <ligand>
        <name>prenylated FMN</name>
        <dbReference type="ChEBI" id="CHEBI:87746"/>
    </ligand>
</feature>
<feature type="binding site" evidence="1">
    <location>
        <begin position="194"/>
        <end position="195"/>
    </location>
    <ligand>
        <name>prenylated FMN</name>
        <dbReference type="ChEBI" id="CHEBI:87746"/>
    </ligand>
</feature>
<feature type="binding site" evidence="1">
    <location>
        <position position="238"/>
    </location>
    <ligand>
        <name>Mn(2+)</name>
        <dbReference type="ChEBI" id="CHEBI:29035"/>
    </ligand>
</feature>
<dbReference type="EC" id="4.1.1.98" evidence="1"/>
<dbReference type="EMBL" id="CP000438">
    <property type="protein sequence ID" value="ABJ14620.1"/>
    <property type="molecule type" value="Genomic_DNA"/>
</dbReference>
<dbReference type="RefSeq" id="WP_003096332.1">
    <property type="nucleotide sequence ID" value="NZ_CP034244.1"/>
</dbReference>
<dbReference type="SMR" id="Q02EC7"/>
<dbReference type="KEGG" id="pau:PA14_69150"/>
<dbReference type="PseudoCAP" id="PA14_69150"/>
<dbReference type="HOGENOM" id="CLU_023348_4_1_6"/>
<dbReference type="BioCyc" id="PAER208963:G1G74-5827-MONOMER"/>
<dbReference type="UniPathway" id="UPA00232"/>
<dbReference type="Proteomes" id="UP000000653">
    <property type="component" value="Chromosome"/>
</dbReference>
<dbReference type="GO" id="GO:0005829">
    <property type="term" value="C:cytosol"/>
    <property type="evidence" value="ECO:0007669"/>
    <property type="project" value="TreeGrafter"/>
</dbReference>
<dbReference type="GO" id="GO:0005886">
    <property type="term" value="C:plasma membrane"/>
    <property type="evidence" value="ECO:0007669"/>
    <property type="project" value="UniProtKB-SubCell"/>
</dbReference>
<dbReference type="GO" id="GO:0008694">
    <property type="term" value="F:3-octaprenyl-4-hydroxybenzoate carboxy-lyase activity"/>
    <property type="evidence" value="ECO:0007669"/>
    <property type="project" value="UniProtKB-UniRule"/>
</dbReference>
<dbReference type="GO" id="GO:0046872">
    <property type="term" value="F:metal ion binding"/>
    <property type="evidence" value="ECO:0007669"/>
    <property type="project" value="UniProtKB-KW"/>
</dbReference>
<dbReference type="GO" id="GO:0006744">
    <property type="term" value="P:ubiquinone biosynthetic process"/>
    <property type="evidence" value="ECO:0007669"/>
    <property type="project" value="UniProtKB-UniRule"/>
</dbReference>
<dbReference type="FunFam" id="1.20.5.570:FF:000001">
    <property type="entry name" value="3-octaprenyl-4-hydroxybenzoate carboxy-lyase"/>
    <property type="match status" value="1"/>
</dbReference>
<dbReference type="FunFam" id="3.40.1670.10:FF:000001">
    <property type="entry name" value="3-octaprenyl-4-hydroxybenzoate carboxy-lyase"/>
    <property type="match status" value="1"/>
</dbReference>
<dbReference type="Gene3D" id="1.20.5.570">
    <property type="entry name" value="Single helix bin"/>
    <property type="match status" value="1"/>
</dbReference>
<dbReference type="Gene3D" id="3.40.1670.10">
    <property type="entry name" value="UbiD C-terminal domain-like"/>
    <property type="match status" value="1"/>
</dbReference>
<dbReference type="HAMAP" id="MF_01636">
    <property type="entry name" value="UbiD"/>
    <property type="match status" value="1"/>
</dbReference>
<dbReference type="InterPro" id="IPR002830">
    <property type="entry name" value="UbiD"/>
</dbReference>
<dbReference type="InterPro" id="IPR049381">
    <property type="entry name" value="UbiD-like_C"/>
</dbReference>
<dbReference type="InterPro" id="IPR049383">
    <property type="entry name" value="UbiD-like_N"/>
</dbReference>
<dbReference type="InterPro" id="IPR023677">
    <property type="entry name" value="UbiD_bacteria"/>
</dbReference>
<dbReference type="InterPro" id="IPR048304">
    <property type="entry name" value="UbiD_Rift_dom"/>
</dbReference>
<dbReference type="NCBIfam" id="NF008175">
    <property type="entry name" value="PRK10922.1"/>
    <property type="match status" value="1"/>
</dbReference>
<dbReference type="NCBIfam" id="TIGR00148">
    <property type="entry name" value="UbiD family decarboxylase"/>
    <property type="match status" value="1"/>
</dbReference>
<dbReference type="PANTHER" id="PTHR30108">
    <property type="entry name" value="3-OCTAPRENYL-4-HYDROXYBENZOATE CARBOXY-LYASE-RELATED"/>
    <property type="match status" value="1"/>
</dbReference>
<dbReference type="PANTHER" id="PTHR30108:SF17">
    <property type="entry name" value="FERULIC ACID DECARBOXYLASE 1"/>
    <property type="match status" value="1"/>
</dbReference>
<dbReference type="Pfam" id="PF01977">
    <property type="entry name" value="UbiD"/>
    <property type="match status" value="1"/>
</dbReference>
<dbReference type="Pfam" id="PF20696">
    <property type="entry name" value="UbiD_C"/>
    <property type="match status" value="1"/>
</dbReference>
<dbReference type="Pfam" id="PF20695">
    <property type="entry name" value="UbiD_N"/>
    <property type="match status" value="1"/>
</dbReference>
<dbReference type="SUPFAM" id="SSF50475">
    <property type="entry name" value="FMN-binding split barrel"/>
    <property type="match status" value="1"/>
</dbReference>
<dbReference type="SUPFAM" id="SSF143968">
    <property type="entry name" value="UbiD C-terminal domain-like"/>
    <property type="match status" value="1"/>
</dbReference>
<evidence type="ECO:0000255" key="1">
    <source>
        <dbReference type="HAMAP-Rule" id="MF_01636"/>
    </source>
</evidence>
<reference key="1">
    <citation type="journal article" date="2006" name="Genome Biol.">
        <title>Genomic analysis reveals that Pseudomonas aeruginosa virulence is combinatorial.</title>
        <authorList>
            <person name="Lee D.G."/>
            <person name="Urbach J.M."/>
            <person name="Wu G."/>
            <person name="Liberati N.T."/>
            <person name="Feinbaum R.L."/>
            <person name="Miyata S."/>
            <person name="Diggins L.T."/>
            <person name="He J."/>
            <person name="Saucier M."/>
            <person name="Deziel E."/>
            <person name="Friedman L."/>
            <person name="Li L."/>
            <person name="Grills G."/>
            <person name="Montgomery K."/>
            <person name="Kucherlapati R."/>
            <person name="Rahme L.G."/>
            <person name="Ausubel F.M."/>
        </authorList>
    </citation>
    <scope>NUCLEOTIDE SEQUENCE [LARGE SCALE GENOMIC DNA]</scope>
    <source>
        <strain>UCBPP-PA14</strain>
    </source>
</reference>
<accession>Q02EC7</accession>
<organism>
    <name type="scientific">Pseudomonas aeruginosa (strain UCBPP-PA14)</name>
    <dbReference type="NCBI Taxonomy" id="208963"/>
    <lineage>
        <taxon>Bacteria</taxon>
        <taxon>Pseudomonadati</taxon>
        <taxon>Pseudomonadota</taxon>
        <taxon>Gammaproteobacteria</taxon>
        <taxon>Pseudomonadales</taxon>
        <taxon>Pseudomonadaceae</taxon>
        <taxon>Pseudomonas</taxon>
    </lineage>
</organism>
<keyword id="KW-1003">Cell membrane</keyword>
<keyword id="KW-0210">Decarboxylase</keyword>
<keyword id="KW-0285">Flavoprotein</keyword>
<keyword id="KW-0288">FMN</keyword>
<keyword id="KW-0456">Lyase</keyword>
<keyword id="KW-0464">Manganese</keyword>
<keyword id="KW-0472">Membrane</keyword>
<keyword id="KW-0479">Metal-binding</keyword>
<keyword id="KW-0831">Ubiquinone biosynthesis</keyword>
<sequence length="488" mass="54621">MTFKDLRDFIAQLEQRGALKRIQVPISPVLEMTEVCDRTLRAKGPALLFEKPTGFDMPVLGNLFGTPERVALGMGAEDVGALREIGKLLAQLKEPEPPKGLKDAWAKLPMYRKVLSMAPKVLKDAPCQEVVEEGEDVDLGRLPVQTCWPGDVGPLITWGLTVTRGPNKERQNLGIYRQQVIGRNKVIMRWLSHRGGALDYREWCQKHPGQPYPVAVALGADPATILGAVTPVPDTLSEYAFAGLLRGHRTELVKCRGSDLQVPASAEIVLEGVIHPGEMADEGPYGDHTGYYNEVDRFPVFTVERVTRRQKPIYHSTYTGRPPDEPAILGVALNEVFVPILQKQFPEIVDFYLPPEGCSYRMAVVTMKKQYPGHAKRVMLGVWSFLRQFMYTKFVIVTDDDIDARDWNDVIWAITTRMDPKRDTVMIDNTPIDYLDFASPVSGLGSKMGLDATHKWPGETSREWGRAIVKDEAVTRRIDALWSSLGID</sequence>
<protein>
    <recommendedName>
        <fullName evidence="1">3-octaprenyl-4-hydroxybenzoate carboxy-lyase</fullName>
        <ecNumber evidence="1">4.1.1.98</ecNumber>
    </recommendedName>
    <alternativeName>
        <fullName evidence="1">Polyprenyl p-hydroxybenzoate decarboxylase</fullName>
    </alternativeName>
</protein>
<comment type="function">
    <text evidence="1">Catalyzes the decarboxylation of 3-octaprenyl-4-hydroxy benzoate to 2-octaprenylphenol, an intermediate step in ubiquinone biosynthesis.</text>
</comment>
<comment type="catalytic activity">
    <reaction evidence="1">
        <text>a 4-hydroxy-3-(all-trans-polyprenyl)benzoate + H(+) = a 2-(all-trans-polyprenyl)phenol + CO2</text>
        <dbReference type="Rhea" id="RHEA:41680"/>
        <dbReference type="Rhea" id="RHEA-COMP:9514"/>
        <dbReference type="Rhea" id="RHEA-COMP:9516"/>
        <dbReference type="ChEBI" id="CHEBI:1269"/>
        <dbReference type="ChEBI" id="CHEBI:15378"/>
        <dbReference type="ChEBI" id="CHEBI:16526"/>
        <dbReference type="ChEBI" id="CHEBI:78396"/>
        <dbReference type="EC" id="4.1.1.98"/>
    </reaction>
</comment>
<comment type="cofactor">
    <cofactor evidence="1">
        <name>prenylated FMN</name>
        <dbReference type="ChEBI" id="CHEBI:87746"/>
    </cofactor>
    <text evidence="1">Binds 1 prenylated FMN per subunit.</text>
</comment>
<comment type="cofactor">
    <cofactor evidence="1">
        <name>Mn(2+)</name>
        <dbReference type="ChEBI" id="CHEBI:29035"/>
    </cofactor>
</comment>
<comment type="pathway">
    <text evidence="1">Cofactor biosynthesis; ubiquinone biosynthesis.</text>
</comment>
<comment type="subunit">
    <text evidence="1">Homohexamer.</text>
</comment>
<comment type="subcellular location">
    <subcellularLocation>
        <location evidence="1">Cell membrane</location>
        <topology evidence="1">Peripheral membrane protein</topology>
    </subcellularLocation>
</comment>
<comment type="similarity">
    <text evidence="1">Belongs to the UbiD family.</text>
</comment>
<proteinExistence type="inferred from homology"/>
<gene>
    <name evidence="1" type="primary">ubiD</name>
    <name type="ordered locus">PA14_69150</name>
</gene>